<comment type="function">
    <text evidence="1">Core subunit of the mitochondrial membrane respiratory chain NADH dehydrogenase (Complex I) that is believed to belong to the minimal assembly required for catalysis. Complex I functions in the transfer of electrons from NADH to the respiratory chain. The immediate electron acceptor for the enzyme is believed to be ubiquinone (By similarity).</text>
</comment>
<comment type="catalytic activity">
    <reaction>
        <text>a ubiquinone + NADH + 5 H(+)(in) = a ubiquinol + NAD(+) + 4 H(+)(out)</text>
        <dbReference type="Rhea" id="RHEA:29091"/>
        <dbReference type="Rhea" id="RHEA-COMP:9565"/>
        <dbReference type="Rhea" id="RHEA-COMP:9566"/>
        <dbReference type="ChEBI" id="CHEBI:15378"/>
        <dbReference type="ChEBI" id="CHEBI:16389"/>
        <dbReference type="ChEBI" id="CHEBI:17976"/>
        <dbReference type="ChEBI" id="CHEBI:57540"/>
        <dbReference type="ChEBI" id="CHEBI:57945"/>
        <dbReference type="EC" id="7.1.1.2"/>
    </reaction>
</comment>
<comment type="subcellular location">
    <subcellularLocation>
        <location evidence="3">Mitochondrion membrane</location>
        <topology evidence="3">Multi-pass membrane protein</topology>
    </subcellularLocation>
</comment>
<comment type="similarity">
    <text evidence="3">Belongs to the complex I subunit 6 family.</text>
</comment>
<evidence type="ECO:0000250" key="1"/>
<evidence type="ECO:0000255" key="2"/>
<evidence type="ECO:0000305" key="3"/>
<organism>
    <name type="scientific">Strongylocentrotus purpuratus</name>
    <name type="common">Purple sea urchin</name>
    <dbReference type="NCBI Taxonomy" id="7668"/>
    <lineage>
        <taxon>Eukaryota</taxon>
        <taxon>Metazoa</taxon>
        <taxon>Echinodermata</taxon>
        <taxon>Eleutherozoa</taxon>
        <taxon>Echinozoa</taxon>
        <taxon>Echinoidea</taxon>
        <taxon>Euechinoidea</taxon>
        <taxon>Echinacea</taxon>
        <taxon>Camarodonta</taxon>
        <taxon>Echinidea</taxon>
        <taxon>Strongylocentrotidae</taxon>
        <taxon>Strongylocentrotus</taxon>
    </lineage>
</organism>
<gene>
    <name type="primary">ND6</name>
</gene>
<geneLocation type="mitochondrion"/>
<proteinExistence type="inferred from homology"/>
<reference key="1">
    <citation type="journal article" date="1988" name="J. Mol. Biol.">
        <title>Nucleotide sequence and gene organization of sea urchin mitochondrial DNA.</title>
        <authorList>
            <person name="Jacobs H.T."/>
            <person name="Elliott D.J."/>
            <person name="Math V.B."/>
            <person name="Farquharson A."/>
        </authorList>
    </citation>
    <scope>NUCLEOTIDE SEQUENCE [GENOMIC DNA]</scope>
</reference>
<accession>P15553</accession>
<keyword id="KW-0249">Electron transport</keyword>
<keyword id="KW-0472">Membrane</keyword>
<keyword id="KW-0496">Mitochondrion</keyword>
<keyword id="KW-0520">NAD</keyword>
<keyword id="KW-1185">Reference proteome</keyword>
<keyword id="KW-0679">Respiratory chain</keyword>
<keyword id="KW-1278">Translocase</keyword>
<keyword id="KW-0812">Transmembrane</keyword>
<keyword id="KW-1133">Transmembrane helix</keyword>
<keyword id="KW-0813">Transport</keyword>
<keyword id="KW-0830">Ubiquinone</keyword>
<protein>
    <recommendedName>
        <fullName>NADH-ubiquinone oxidoreductase chain 6</fullName>
        <ecNumber>7.1.1.2</ecNumber>
    </recommendedName>
    <alternativeName>
        <fullName>NADH dehydrogenase subunit 6</fullName>
    </alternativeName>
</protein>
<feature type="chain" id="PRO_0000118337" description="NADH-ubiquinone oxidoreductase chain 6">
    <location>
        <begin position="1"/>
        <end position="165"/>
    </location>
</feature>
<feature type="transmembrane region" description="Helical" evidence="2">
    <location>
        <begin position="1"/>
        <end position="21"/>
    </location>
</feature>
<feature type="transmembrane region" description="Helical" evidence="2">
    <location>
        <begin position="47"/>
        <end position="67"/>
    </location>
</feature>
<feature type="transmembrane region" description="Helical" evidence="2">
    <location>
        <begin position="83"/>
        <end position="103"/>
    </location>
</feature>
<feature type="transmembrane region" description="Helical" evidence="2">
    <location>
        <begin position="130"/>
        <end position="150"/>
    </location>
</feature>
<dbReference type="EC" id="7.1.1.2"/>
<dbReference type="EMBL" id="X12631">
    <property type="protein sequence ID" value="CAA31161.1"/>
    <property type="molecule type" value="Genomic_DNA"/>
</dbReference>
<dbReference type="PIR" id="S01510">
    <property type="entry name" value="S01510"/>
</dbReference>
<dbReference type="RefSeq" id="NP_006976.1">
    <property type="nucleotide sequence ID" value="NC_001453.1"/>
</dbReference>
<dbReference type="SMR" id="P15553"/>
<dbReference type="FunCoup" id="P15553">
    <property type="interactions" value="25"/>
</dbReference>
<dbReference type="STRING" id="7668.P15553"/>
<dbReference type="EnsemblMetazoa" id="GeneID_2652726_df_mr">
    <property type="protein sequence ID" value="NP_006976"/>
    <property type="gene ID" value="GeneID_2652726"/>
</dbReference>
<dbReference type="GeneID" id="2652726"/>
<dbReference type="KEGG" id="spu:2652726"/>
<dbReference type="CTD" id="4541"/>
<dbReference type="InParanoid" id="P15553"/>
<dbReference type="OMA" id="WVIYDTG"/>
<dbReference type="OrthoDB" id="9837654at2759"/>
<dbReference type="PhylomeDB" id="P15553"/>
<dbReference type="Proteomes" id="UP000007110">
    <property type="component" value="Unassembled WGS sequence"/>
</dbReference>
<dbReference type="GO" id="GO:0031966">
    <property type="term" value="C:mitochondrial membrane"/>
    <property type="evidence" value="ECO:0007669"/>
    <property type="project" value="UniProtKB-SubCell"/>
</dbReference>
<dbReference type="GO" id="GO:0005739">
    <property type="term" value="C:mitochondrion"/>
    <property type="evidence" value="ECO:0000318"/>
    <property type="project" value="GO_Central"/>
</dbReference>
<dbReference type="GO" id="GO:0008137">
    <property type="term" value="F:NADH dehydrogenase (ubiquinone) activity"/>
    <property type="evidence" value="ECO:0007669"/>
    <property type="project" value="UniProtKB-EC"/>
</dbReference>
<dbReference type="Gene3D" id="1.20.120.1200">
    <property type="entry name" value="NADH-ubiquinone/plastoquinone oxidoreductase chain 6, subunit NuoJ"/>
    <property type="match status" value="1"/>
</dbReference>
<dbReference type="InterPro" id="IPR050269">
    <property type="entry name" value="ComplexI_Subunit6"/>
</dbReference>
<dbReference type="InterPro" id="IPR001457">
    <property type="entry name" value="NADH_UbQ/plastoQ_OxRdtase_su6"/>
</dbReference>
<dbReference type="InterPro" id="IPR042106">
    <property type="entry name" value="Nuo/plastoQ_OxRdtase_6_NuoJ"/>
</dbReference>
<dbReference type="PANTHER" id="PTHR11435">
    <property type="entry name" value="NADH UBIQUINONE OXIDOREDUCTASE SUBUNIT ND6"/>
    <property type="match status" value="1"/>
</dbReference>
<dbReference type="PANTHER" id="PTHR11435:SF1">
    <property type="entry name" value="NADH-UBIQUINONE OXIDOREDUCTASE CHAIN 6"/>
    <property type="match status" value="1"/>
</dbReference>
<dbReference type="Pfam" id="PF00499">
    <property type="entry name" value="Oxidored_q3"/>
    <property type="match status" value="1"/>
</dbReference>
<sequence length="165" mass="18040">MVVYVTLIVMLFGSTLVFYSLSPYYSALGLVVFSVPGSFVLSFLGSSFVPIVLFLVYIGGMLVVFPYSSAISPERFPSVNNLGEVVGLVFLFSSWVFMSFDNFQDLKNIFHCFVSGESLVGSNTFYNSGGVLVILGVFVLLVALVGALIISRGIESTIIRAIWLW</sequence>
<name>NU6M_STRPU</name>